<sequence>MDAMQKTIEYTSVSRIAGPLMVIDGIEGIAYGEIVDITTPNGDKRTGQVLEAREEIAVVQVFEGTSELNTSETKVRFTGDTAKIGVSYDMLGRIFNGAGKPLDGGPEIIAEKKLDINGYPLNPVSRNPPNAFVQTGISTIDGTNTLVRGQKIPIFSGSGLPHNKLATQIARQAKVRGEGEQFAVVFAAMGITGEESNYFMDEFKKTGALEKAVVFINLADDPAIERILTPRIALTTAEYLAYEKGMHVLVILTDLTNYCEALREIAAARNEVPGRRGYPGYMYTDLACLYERAGRVKGREGTVTQIPILTMPDDDITHPIPDLTGYITEGQIVLSRELNRKGIYPPVDILPSLSRLAGNGQGEGKTRDDHSKVISQAYAAYAEGRGLRDLVAVVGEEALTERDRSFLKFADAFENSIVTQGVDEDRSIEETLDYVWDLLTILPREELKRVSDELIEKYLPKK</sequence>
<keyword id="KW-0066">ATP synthesis</keyword>
<keyword id="KW-1003">Cell membrane</keyword>
<keyword id="KW-0375">Hydrogen ion transport</keyword>
<keyword id="KW-0406">Ion transport</keyword>
<keyword id="KW-0472">Membrane</keyword>
<keyword id="KW-0813">Transport</keyword>
<gene>
    <name evidence="1" type="primary">atpB</name>
    <name type="ordered locus">MmarC7_0299</name>
</gene>
<feature type="chain" id="PRO_1000059379" description="A-type ATP synthase subunit B">
    <location>
        <begin position="1"/>
        <end position="462"/>
    </location>
</feature>
<dbReference type="EMBL" id="CP000745">
    <property type="protein sequence ID" value="ABR65369.1"/>
    <property type="molecule type" value="Genomic_DNA"/>
</dbReference>
<dbReference type="SMR" id="A6VFZ3"/>
<dbReference type="STRING" id="426368.MmarC7_0299"/>
<dbReference type="KEGG" id="mmz:MmarC7_0299"/>
<dbReference type="eggNOG" id="arCOG00865">
    <property type="taxonomic scope" value="Archaea"/>
</dbReference>
<dbReference type="HOGENOM" id="CLU_022916_0_0_2"/>
<dbReference type="OrthoDB" id="32941at2157"/>
<dbReference type="GO" id="GO:0005886">
    <property type="term" value="C:plasma membrane"/>
    <property type="evidence" value="ECO:0007669"/>
    <property type="project" value="UniProtKB-SubCell"/>
</dbReference>
<dbReference type="GO" id="GO:0005524">
    <property type="term" value="F:ATP binding"/>
    <property type="evidence" value="ECO:0007669"/>
    <property type="project" value="UniProtKB-UniRule"/>
</dbReference>
<dbReference type="GO" id="GO:0046933">
    <property type="term" value="F:proton-transporting ATP synthase activity, rotational mechanism"/>
    <property type="evidence" value="ECO:0007669"/>
    <property type="project" value="UniProtKB-UniRule"/>
</dbReference>
<dbReference type="GO" id="GO:0042777">
    <property type="term" value="P:proton motive force-driven plasma membrane ATP synthesis"/>
    <property type="evidence" value="ECO:0007669"/>
    <property type="project" value="UniProtKB-UniRule"/>
</dbReference>
<dbReference type="CDD" id="cd18112">
    <property type="entry name" value="ATP-synt_V_A-type_beta_C"/>
    <property type="match status" value="1"/>
</dbReference>
<dbReference type="CDD" id="cd18118">
    <property type="entry name" value="ATP-synt_V_A-type_beta_N"/>
    <property type="match status" value="1"/>
</dbReference>
<dbReference type="CDD" id="cd01135">
    <property type="entry name" value="V_A-ATPase_B"/>
    <property type="match status" value="1"/>
</dbReference>
<dbReference type="Gene3D" id="3.40.50.12240">
    <property type="match status" value="1"/>
</dbReference>
<dbReference type="HAMAP" id="MF_00310">
    <property type="entry name" value="ATP_synth_B_arch"/>
    <property type="match status" value="1"/>
</dbReference>
<dbReference type="InterPro" id="IPR055190">
    <property type="entry name" value="ATP-synt_VA_C"/>
</dbReference>
<dbReference type="InterPro" id="IPR020003">
    <property type="entry name" value="ATPase_a/bsu_AS"/>
</dbReference>
<dbReference type="InterPro" id="IPR004100">
    <property type="entry name" value="ATPase_F1/V1/A1_a/bsu_N"/>
</dbReference>
<dbReference type="InterPro" id="IPR000194">
    <property type="entry name" value="ATPase_F1/V1/A1_a/bsu_nucl-bd"/>
</dbReference>
<dbReference type="InterPro" id="IPR027417">
    <property type="entry name" value="P-loop_NTPase"/>
</dbReference>
<dbReference type="InterPro" id="IPR022879">
    <property type="entry name" value="V-ATPase_su_B/beta"/>
</dbReference>
<dbReference type="NCBIfam" id="NF003235">
    <property type="entry name" value="PRK04196.1"/>
    <property type="match status" value="1"/>
</dbReference>
<dbReference type="PANTHER" id="PTHR43389">
    <property type="entry name" value="V-TYPE PROTON ATPASE SUBUNIT B"/>
    <property type="match status" value="1"/>
</dbReference>
<dbReference type="PANTHER" id="PTHR43389:SF4">
    <property type="entry name" value="V-TYPE PROTON ATPASE SUBUNIT B"/>
    <property type="match status" value="1"/>
</dbReference>
<dbReference type="Pfam" id="PF00006">
    <property type="entry name" value="ATP-synt_ab"/>
    <property type="match status" value="1"/>
</dbReference>
<dbReference type="Pfam" id="PF02874">
    <property type="entry name" value="ATP-synt_ab_N"/>
    <property type="match status" value="1"/>
</dbReference>
<dbReference type="Pfam" id="PF22919">
    <property type="entry name" value="ATP-synt_VA_C"/>
    <property type="match status" value="1"/>
</dbReference>
<dbReference type="PIRSF" id="PIRSF039114">
    <property type="entry name" value="V-ATPsynth_beta/V-ATPase_B"/>
    <property type="match status" value="1"/>
</dbReference>
<dbReference type="SUPFAM" id="SSF47917">
    <property type="entry name" value="C-terminal domain of alpha and beta subunits of F1 ATP synthase"/>
    <property type="match status" value="1"/>
</dbReference>
<dbReference type="SUPFAM" id="SSF52540">
    <property type="entry name" value="P-loop containing nucleoside triphosphate hydrolases"/>
    <property type="match status" value="1"/>
</dbReference>
<dbReference type="PROSITE" id="PS00152">
    <property type="entry name" value="ATPASE_ALPHA_BETA"/>
    <property type="match status" value="1"/>
</dbReference>
<name>AATB_METM7</name>
<protein>
    <recommendedName>
        <fullName evidence="1">A-type ATP synthase subunit B</fullName>
    </recommendedName>
</protein>
<evidence type="ECO:0000255" key="1">
    <source>
        <dbReference type="HAMAP-Rule" id="MF_00310"/>
    </source>
</evidence>
<comment type="function">
    <text evidence="1">Component of the A-type ATP synthase that produces ATP from ADP in the presence of a proton gradient across the membrane. The B chain is a regulatory subunit.</text>
</comment>
<comment type="subunit">
    <text evidence="1">Has multiple subunits with at least A(3), B(3), C, D, E, F, H, I and proteolipid K(x).</text>
</comment>
<comment type="subcellular location">
    <subcellularLocation>
        <location evidence="1">Cell membrane</location>
        <topology evidence="1">Peripheral membrane protein</topology>
    </subcellularLocation>
</comment>
<comment type="similarity">
    <text evidence="1">Belongs to the ATPase alpha/beta chains family.</text>
</comment>
<accession>A6VFZ3</accession>
<organism>
    <name type="scientific">Methanococcus maripaludis (strain C7 / ATCC BAA-1331)</name>
    <dbReference type="NCBI Taxonomy" id="426368"/>
    <lineage>
        <taxon>Archaea</taxon>
        <taxon>Methanobacteriati</taxon>
        <taxon>Methanobacteriota</taxon>
        <taxon>Methanomada group</taxon>
        <taxon>Methanococci</taxon>
        <taxon>Methanococcales</taxon>
        <taxon>Methanococcaceae</taxon>
        <taxon>Methanococcus</taxon>
    </lineage>
</organism>
<reference key="1">
    <citation type="submission" date="2007-06" db="EMBL/GenBank/DDBJ databases">
        <title>Complete sequence of Methanococcus maripaludis C7.</title>
        <authorList>
            <consortium name="US DOE Joint Genome Institute"/>
            <person name="Copeland A."/>
            <person name="Lucas S."/>
            <person name="Lapidus A."/>
            <person name="Barry K."/>
            <person name="Glavina del Rio T."/>
            <person name="Dalin E."/>
            <person name="Tice H."/>
            <person name="Pitluck S."/>
            <person name="Clum A."/>
            <person name="Schmutz J."/>
            <person name="Larimer F."/>
            <person name="Land M."/>
            <person name="Hauser L."/>
            <person name="Kyrpides N."/>
            <person name="Anderson I."/>
            <person name="Sieprawska-Lupa M."/>
            <person name="Whitman W.B."/>
            <person name="Richardson P."/>
        </authorList>
    </citation>
    <scope>NUCLEOTIDE SEQUENCE [LARGE SCALE GENOMIC DNA]</scope>
    <source>
        <strain>C7 / ATCC BAA-1331</strain>
    </source>
</reference>
<proteinExistence type="inferred from homology"/>